<sequence>MAIIHPKVRGFICTTTHPKGCELNVRDQIEATRKLGVREDGPKKVLVIGASSGYGLAARITAAFGFKADTLGVFFEKPGTETKAGTAGWYNAAAFDKFAKAEGLYSKSINGDAFSDEARAKVIELIKNEMGGKVDLVIYSLASPVRKLPQTGEVIRSALKPIGQPYKSTAIDTNKDTIIEASIEPATEQEIADTVTVMGGQDWQLWIDALAGANVLAEGARTVAFSYIGSDITWPIYWHGALGQAKQDLDETALRLNQKLAGEVKGGANVAVLKSVVTQASSAIPVMPLYLSMVFKIMQEKGVHEGTQDQLDRMYRDRMYRTDGAPAEVDEKGRLRLDDWELRDDVQNACKALWPQVTTENLFELTDYAGYKKQFLNLFGFERADVDYDKDVATDVKFDCVEL</sequence>
<accession>Q88E33</accession>
<evidence type="ECO:0000255" key="1">
    <source>
        <dbReference type="HAMAP-Rule" id="MF_01838"/>
    </source>
</evidence>
<protein>
    <recommendedName>
        <fullName evidence="1">Enoyl-[acyl-carrier-protein] reductase [NADH]</fullName>
        <shortName evidence="1">ENR</shortName>
        <ecNumber evidence="1">1.3.1.9</ecNumber>
    </recommendedName>
</protein>
<dbReference type="EC" id="1.3.1.9" evidence="1"/>
<dbReference type="EMBL" id="AE015451">
    <property type="protein sequence ID" value="AAN70208.1"/>
    <property type="molecule type" value="Genomic_DNA"/>
</dbReference>
<dbReference type="RefSeq" id="NP_746744.1">
    <property type="nucleotide sequence ID" value="NC_002947.4"/>
</dbReference>
<dbReference type="RefSeq" id="WP_010955296.1">
    <property type="nucleotide sequence ID" value="NZ_CP169744.1"/>
</dbReference>
<dbReference type="SMR" id="Q88E33"/>
<dbReference type="STRING" id="160488.PP_4635"/>
<dbReference type="PaxDb" id="160488-PP_4635"/>
<dbReference type="GeneID" id="83682342"/>
<dbReference type="KEGG" id="ppu:PP_4635"/>
<dbReference type="PATRIC" id="fig|160488.4.peg.4943"/>
<dbReference type="eggNOG" id="COG3007">
    <property type="taxonomic scope" value="Bacteria"/>
</dbReference>
<dbReference type="HOGENOM" id="CLU_057698_1_0_6"/>
<dbReference type="OrthoDB" id="9802260at2"/>
<dbReference type="PhylomeDB" id="Q88E33"/>
<dbReference type="BioCyc" id="PPUT160488:G1G01-4948-MONOMER"/>
<dbReference type="UniPathway" id="UPA00094"/>
<dbReference type="Proteomes" id="UP000000556">
    <property type="component" value="Chromosome"/>
</dbReference>
<dbReference type="GO" id="GO:0004318">
    <property type="term" value="F:enoyl-[acyl-carrier-protein] reductase (NADH) activity"/>
    <property type="evidence" value="ECO:0007669"/>
    <property type="project" value="UniProtKB-UniRule"/>
</dbReference>
<dbReference type="GO" id="GO:0051287">
    <property type="term" value="F:NAD binding"/>
    <property type="evidence" value="ECO:0007669"/>
    <property type="project" value="UniProtKB-UniRule"/>
</dbReference>
<dbReference type="GO" id="GO:0050343">
    <property type="term" value="F:trans-2-enoyl-CoA reductase (NADH) activity"/>
    <property type="evidence" value="ECO:0007669"/>
    <property type="project" value="TreeGrafter"/>
</dbReference>
<dbReference type="GO" id="GO:0006633">
    <property type="term" value="P:fatty acid biosynthetic process"/>
    <property type="evidence" value="ECO:0007669"/>
    <property type="project" value="UniProtKB-UniRule"/>
</dbReference>
<dbReference type="FunFam" id="3.40.50.720:FF:000221">
    <property type="entry name" value="Enoyl-[acyl-carrier-protein] reductase [NADH]"/>
    <property type="match status" value="1"/>
</dbReference>
<dbReference type="Gene3D" id="3.40.50.720">
    <property type="entry name" value="NAD(P)-binding Rossmann-like Domain"/>
    <property type="match status" value="1"/>
</dbReference>
<dbReference type="HAMAP" id="MF_01838">
    <property type="entry name" value="FabV_reductase"/>
    <property type="match status" value="1"/>
</dbReference>
<dbReference type="InterPro" id="IPR024906">
    <property type="entry name" value="Eno_Rdtase_FAD-bd_dom"/>
</dbReference>
<dbReference type="InterPro" id="IPR024910">
    <property type="entry name" value="Enoyl-CoA_Rdtase_cat_dom"/>
</dbReference>
<dbReference type="InterPro" id="IPR050048">
    <property type="entry name" value="FabV-like_NADH_b"/>
</dbReference>
<dbReference type="InterPro" id="IPR010758">
    <property type="entry name" value="Trans-2-enoyl-CoA_reductase"/>
</dbReference>
<dbReference type="NCBIfam" id="NF043048">
    <property type="entry name" value="EnoyACPredFabV"/>
    <property type="match status" value="1"/>
</dbReference>
<dbReference type="NCBIfam" id="NF010177">
    <property type="entry name" value="PRK13656.1"/>
    <property type="match status" value="1"/>
</dbReference>
<dbReference type="PANTHER" id="PTHR37480">
    <property type="entry name" value="ENOYL-[ACYL-CARRIER-PROTEIN] REDUCTASE [NADH]"/>
    <property type="match status" value="1"/>
</dbReference>
<dbReference type="PANTHER" id="PTHR37480:SF1">
    <property type="entry name" value="ENOYL-[ACYL-CARRIER-PROTEIN] REDUCTASE [NADH]"/>
    <property type="match status" value="1"/>
</dbReference>
<dbReference type="Pfam" id="PF07055">
    <property type="entry name" value="Eno-Rase_FAD_bd"/>
    <property type="match status" value="1"/>
</dbReference>
<dbReference type="Pfam" id="PF12242">
    <property type="entry name" value="Eno-Rase_NADH_b"/>
    <property type="match status" value="1"/>
</dbReference>
<dbReference type="Pfam" id="PF12241">
    <property type="entry name" value="Enoyl_reductase"/>
    <property type="match status" value="1"/>
</dbReference>
<name>FABV_PSEPK</name>
<organism>
    <name type="scientific">Pseudomonas putida (strain ATCC 47054 / DSM 6125 / CFBP 8728 / NCIMB 11950 / KT2440)</name>
    <dbReference type="NCBI Taxonomy" id="160488"/>
    <lineage>
        <taxon>Bacteria</taxon>
        <taxon>Pseudomonadati</taxon>
        <taxon>Pseudomonadota</taxon>
        <taxon>Gammaproteobacteria</taxon>
        <taxon>Pseudomonadales</taxon>
        <taxon>Pseudomonadaceae</taxon>
        <taxon>Pseudomonas</taxon>
    </lineage>
</organism>
<feature type="chain" id="PRO_0000220047" description="Enoyl-[acyl-carrier-protein] reductase [NADH]">
    <location>
        <begin position="1"/>
        <end position="403"/>
    </location>
</feature>
<feature type="active site" description="Proton donor" evidence="1">
    <location>
        <position position="237"/>
    </location>
</feature>
<feature type="binding site" evidence="1">
    <location>
        <begin position="49"/>
        <end position="54"/>
    </location>
    <ligand>
        <name>NAD(+)</name>
        <dbReference type="ChEBI" id="CHEBI:57540"/>
    </ligand>
</feature>
<feature type="binding site" evidence="1">
    <location>
        <begin position="75"/>
        <end position="76"/>
    </location>
    <ligand>
        <name>NAD(+)</name>
        <dbReference type="ChEBI" id="CHEBI:57540"/>
    </ligand>
</feature>
<feature type="binding site" evidence="1">
    <location>
        <begin position="112"/>
        <end position="113"/>
    </location>
    <ligand>
        <name>NAD(+)</name>
        <dbReference type="ChEBI" id="CHEBI:57540"/>
    </ligand>
</feature>
<feature type="binding site" evidence="1">
    <location>
        <begin position="141"/>
        <end position="142"/>
    </location>
    <ligand>
        <name>NAD(+)</name>
        <dbReference type="ChEBI" id="CHEBI:57540"/>
    </ligand>
</feature>
<feature type="binding site" evidence="1">
    <location>
        <position position="227"/>
    </location>
    <ligand>
        <name>substrate</name>
    </ligand>
</feature>
<feature type="binding site" evidence="1">
    <location>
        <position position="246"/>
    </location>
    <ligand>
        <name>NAD(+)</name>
        <dbReference type="ChEBI" id="CHEBI:57540"/>
    </ligand>
</feature>
<feature type="binding site" evidence="1">
    <location>
        <begin position="276"/>
        <end position="278"/>
    </location>
    <ligand>
        <name>NAD(+)</name>
        <dbReference type="ChEBI" id="CHEBI:57540"/>
    </ligand>
</feature>
<feature type="site" description="Plays an important role in discriminating NADH against NADPH" evidence="1">
    <location>
        <position position="76"/>
    </location>
</feature>
<comment type="function">
    <text evidence="1">Involved in the final reduction of the elongation cycle of fatty acid synthesis (FAS II). Catalyzes the reduction of a carbon-carbon double bond in an enoyl moiety that is covalently linked to an acyl carrier protein (ACP).</text>
</comment>
<comment type="catalytic activity">
    <reaction evidence="1">
        <text>a 2,3-saturated acyl-[ACP] + NAD(+) = a (2E)-enoyl-[ACP] + NADH + H(+)</text>
        <dbReference type="Rhea" id="RHEA:10240"/>
        <dbReference type="Rhea" id="RHEA-COMP:9925"/>
        <dbReference type="Rhea" id="RHEA-COMP:9926"/>
        <dbReference type="ChEBI" id="CHEBI:15378"/>
        <dbReference type="ChEBI" id="CHEBI:57540"/>
        <dbReference type="ChEBI" id="CHEBI:57945"/>
        <dbReference type="ChEBI" id="CHEBI:78784"/>
        <dbReference type="ChEBI" id="CHEBI:78785"/>
        <dbReference type="EC" id="1.3.1.9"/>
    </reaction>
</comment>
<comment type="pathway">
    <text evidence="1">Lipid metabolism; fatty acid biosynthesis.</text>
</comment>
<comment type="subunit">
    <text evidence="1">Monomer.</text>
</comment>
<comment type="similarity">
    <text evidence="1">Belongs to the TER reductase family.</text>
</comment>
<keyword id="KW-0275">Fatty acid biosynthesis</keyword>
<keyword id="KW-0276">Fatty acid metabolism</keyword>
<keyword id="KW-0444">Lipid biosynthesis</keyword>
<keyword id="KW-0443">Lipid metabolism</keyword>
<keyword id="KW-0520">NAD</keyword>
<keyword id="KW-0560">Oxidoreductase</keyword>
<keyword id="KW-1185">Reference proteome</keyword>
<reference key="1">
    <citation type="journal article" date="2002" name="Environ. Microbiol.">
        <title>Complete genome sequence and comparative analysis of the metabolically versatile Pseudomonas putida KT2440.</title>
        <authorList>
            <person name="Nelson K.E."/>
            <person name="Weinel C."/>
            <person name="Paulsen I.T."/>
            <person name="Dodson R.J."/>
            <person name="Hilbert H."/>
            <person name="Martins dos Santos V.A.P."/>
            <person name="Fouts D.E."/>
            <person name="Gill S.R."/>
            <person name="Pop M."/>
            <person name="Holmes M."/>
            <person name="Brinkac L.M."/>
            <person name="Beanan M.J."/>
            <person name="DeBoy R.T."/>
            <person name="Daugherty S.C."/>
            <person name="Kolonay J.F."/>
            <person name="Madupu R."/>
            <person name="Nelson W.C."/>
            <person name="White O."/>
            <person name="Peterson J.D."/>
            <person name="Khouri H.M."/>
            <person name="Hance I."/>
            <person name="Chris Lee P."/>
            <person name="Holtzapple E.K."/>
            <person name="Scanlan D."/>
            <person name="Tran K."/>
            <person name="Moazzez A."/>
            <person name="Utterback T.R."/>
            <person name="Rizzo M."/>
            <person name="Lee K."/>
            <person name="Kosack D."/>
            <person name="Moestl D."/>
            <person name="Wedler H."/>
            <person name="Lauber J."/>
            <person name="Stjepandic D."/>
            <person name="Hoheisel J."/>
            <person name="Straetz M."/>
            <person name="Heim S."/>
            <person name="Kiewitz C."/>
            <person name="Eisen J.A."/>
            <person name="Timmis K.N."/>
            <person name="Duesterhoeft A."/>
            <person name="Tuemmler B."/>
            <person name="Fraser C.M."/>
        </authorList>
    </citation>
    <scope>NUCLEOTIDE SEQUENCE [LARGE SCALE GENOMIC DNA]</scope>
    <source>
        <strain>ATCC 47054 / DSM 6125 / CFBP 8728 / NCIMB 11950 / KT2440</strain>
    </source>
</reference>
<gene>
    <name evidence="1" type="primary">fabV</name>
    <name type="ordered locus">PP_4635</name>
</gene>
<proteinExistence type="inferred from homology"/>